<protein>
    <recommendedName>
        <fullName>DNA replication ATP-dependent helicase/nuclease dna2</fullName>
    </recommendedName>
    <domain>
        <recommendedName>
            <fullName>DNA replication nuclease dna2</fullName>
            <ecNumber>3.1.-.-</ecNumber>
        </recommendedName>
    </domain>
    <domain>
        <recommendedName>
            <fullName>DNA replication ATP-dependent helicase dna2</fullName>
            <ecNumber>3.6.4.12</ecNumber>
        </recommendedName>
    </domain>
</protein>
<organism>
    <name type="scientific">Schizosaccharomyces pombe (strain 972 / ATCC 24843)</name>
    <name type="common">Fission yeast</name>
    <dbReference type="NCBI Taxonomy" id="284812"/>
    <lineage>
        <taxon>Eukaryota</taxon>
        <taxon>Fungi</taxon>
        <taxon>Dikarya</taxon>
        <taxon>Ascomycota</taxon>
        <taxon>Taphrinomycotina</taxon>
        <taxon>Schizosaccharomycetes</taxon>
        <taxon>Schizosaccharomycetales</taxon>
        <taxon>Schizosaccharomycetaceae</taxon>
        <taxon>Schizosaccharomyces</taxon>
    </lineage>
</organism>
<evidence type="ECO:0000250" key="1"/>
<evidence type="ECO:0000256" key="2">
    <source>
        <dbReference type="SAM" id="MobiDB-lite"/>
    </source>
</evidence>
<evidence type="ECO:0000269" key="3">
    <source>
    </source>
</evidence>
<evidence type="ECO:0000269" key="4">
    <source>
    </source>
</evidence>
<evidence type="ECO:0000269" key="5">
    <source>
    </source>
</evidence>
<evidence type="ECO:0000269" key="6">
    <source>
    </source>
</evidence>
<evidence type="ECO:0000269" key="7">
    <source>
    </source>
</evidence>
<evidence type="ECO:0000305" key="8"/>
<keyword id="KW-0004">4Fe-4S</keyword>
<keyword id="KW-0067">ATP-binding</keyword>
<keyword id="KW-0158">Chromosome</keyword>
<keyword id="KW-0963">Cytoplasm</keyword>
<keyword id="KW-0227">DNA damage</keyword>
<keyword id="KW-0234">DNA repair</keyword>
<keyword id="KW-0235">DNA replication</keyword>
<keyword id="KW-0238">DNA-binding</keyword>
<keyword id="KW-0255">Endonuclease</keyword>
<keyword id="KW-0347">Helicase</keyword>
<keyword id="KW-0378">Hydrolase</keyword>
<keyword id="KW-0408">Iron</keyword>
<keyword id="KW-0411">Iron-sulfur</keyword>
<keyword id="KW-0479">Metal-binding</keyword>
<keyword id="KW-0511">Multifunctional enzyme</keyword>
<keyword id="KW-0540">Nuclease</keyword>
<keyword id="KW-0547">Nucleotide-binding</keyword>
<keyword id="KW-0539">Nucleus</keyword>
<keyword id="KW-0597">Phosphoprotein</keyword>
<keyword id="KW-1185">Reference proteome</keyword>
<keyword id="KW-0779">Telomere</keyword>
<accession>Q9URU2</accession>
<accession>O74241</accession>
<accession>Q9UTT6</accession>
<accession>Q9UUK8</accession>
<name>DNA2_SCHPO</name>
<feature type="chain" id="PRO_0000080710" description="DNA replication ATP-dependent helicase/nuclease dna2">
    <location>
        <begin position="1"/>
        <end position="1397"/>
    </location>
</feature>
<feature type="region of interest" description="Disordered" evidence="2">
    <location>
        <begin position="1"/>
        <end position="32"/>
    </location>
</feature>
<feature type="region of interest" description="Nuclease activity" evidence="1">
    <location>
        <begin position="390"/>
        <end position="808"/>
    </location>
</feature>
<feature type="region of interest" description="Helicase activity" evidence="1">
    <location>
        <begin position="809"/>
        <end position="1397"/>
    </location>
</feature>
<feature type="binding site" evidence="1">
    <location>
        <position position="450"/>
    </location>
    <ligand>
        <name>[4Fe-4S] cluster</name>
        <dbReference type="ChEBI" id="CHEBI:49883"/>
    </ligand>
</feature>
<feature type="binding site" evidence="1">
    <location>
        <position position="679"/>
    </location>
    <ligand>
        <name>[4Fe-4S] cluster</name>
        <dbReference type="ChEBI" id="CHEBI:49883"/>
    </ligand>
</feature>
<feature type="binding site" evidence="1">
    <location>
        <position position="682"/>
    </location>
    <ligand>
        <name>[4Fe-4S] cluster</name>
        <dbReference type="ChEBI" id="CHEBI:49883"/>
    </ligand>
</feature>
<feature type="binding site" evidence="1">
    <location>
        <position position="688"/>
    </location>
    <ligand>
        <name>[4Fe-4S] cluster</name>
        <dbReference type="ChEBI" id="CHEBI:49883"/>
    </ligand>
</feature>
<feature type="binding site" evidence="1">
    <location>
        <begin position="954"/>
        <end position="961"/>
    </location>
    <ligand>
        <name>ATP</name>
        <dbReference type="ChEBI" id="CHEBI:30616"/>
    </ligand>
</feature>
<feature type="modified residue" description="Phosphoserine" evidence="7">
    <location>
        <position position="134"/>
    </location>
</feature>
<feature type="modified residue" description="Phosphoserine; by CHEK2" evidence="7">
    <location>
        <position position="219"/>
    </location>
</feature>
<feature type="mutagenesis site" description="Impaired phosphorylation by cds1/check2, leading to stalled fork reversing." evidence="7">
    <original>S</original>
    <variation>A</variation>
    <location>
        <position position="219"/>
    </location>
</feature>
<feature type="mutagenesis site" description="Mimics phosphorylation; not able to rescue hydroxyurea-sensitivity in cds1 mutant cells." evidence="7">
    <original>S</original>
    <variation>D</variation>
    <location>
        <position position="219"/>
    </location>
</feature>
<feature type="mutagenesis site" description="Not able to complement a dna2(ts) mutant at restrictive temperature of 36 degrees Celsius." evidence="7">
    <original>E</original>
    <variation>A</variation>
    <location>
        <position position="559"/>
    </location>
</feature>
<feature type="mutagenesis site" description="Able to complement a dna2(ts) mutant at restrictive temperature of 36 degrees Celsius." evidence="7">
    <original>K</original>
    <variation>T</variation>
    <location>
        <position position="960"/>
    </location>
</feature>
<dbReference type="EC" id="3.1.-.-"/>
<dbReference type="EC" id="3.6.4.12"/>
<dbReference type="EMBL" id="AF144384">
    <property type="protein sequence ID" value="AAD38528.1"/>
    <property type="molecule type" value="Genomic_DNA"/>
</dbReference>
<dbReference type="EMBL" id="CU329671">
    <property type="protein sequence ID" value="CAB38508.2"/>
    <property type="molecule type" value="Genomic_DNA"/>
</dbReference>
<dbReference type="EMBL" id="AB028014">
    <property type="protein sequence ID" value="BAA87318.1"/>
    <property type="molecule type" value="Genomic_DNA"/>
</dbReference>
<dbReference type="EMBL" id="AF075169">
    <property type="protein sequence ID" value="AAC39502.1"/>
    <property type="molecule type" value="Genomic_DNA"/>
</dbReference>
<dbReference type="PIR" id="T39568">
    <property type="entry name" value="T39568"/>
</dbReference>
<dbReference type="PIR" id="T47242">
    <property type="entry name" value="T47242"/>
</dbReference>
<dbReference type="PIR" id="T51292">
    <property type="entry name" value="T51292"/>
</dbReference>
<dbReference type="RefSeq" id="NP_596499.2">
    <property type="nucleotide sequence ID" value="NM_001022420.2"/>
</dbReference>
<dbReference type="SMR" id="Q9URU2"/>
<dbReference type="BioGRID" id="276685">
    <property type="interactions" value="21"/>
</dbReference>
<dbReference type="DIP" id="DIP-61017N"/>
<dbReference type="FunCoup" id="Q9URU2">
    <property type="interactions" value="516"/>
</dbReference>
<dbReference type="IntAct" id="Q9URU2">
    <property type="interactions" value="3"/>
</dbReference>
<dbReference type="STRING" id="284812.Q9URU2"/>
<dbReference type="iPTMnet" id="Q9URU2"/>
<dbReference type="PaxDb" id="4896-SPBC16D10.04c.1"/>
<dbReference type="EnsemblFungi" id="SPBC16D10.04c.1">
    <property type="protein sequence ID" value="SPBC16D10.04c.1:pep"/>
    <property type="gene ID" value="SPBC16D10.04c"/>
</dbReference>
<dbReference type="GeneID" id="2540148"/>
<dbReference type="KEGG" id="spo:2540148"/>
<dbReference type="PomBase" id="SPBC16D10.04c">
    <property type="gene designation" value="dna2"/>
</dbReference>
<dbReference type="VEuPathDB" id="FungiDB:SPBC16D10.04c"/>
<dbReference type="eggNOG" id="KOG1805">
    <property type="taxonomic scope" value="Eukaryota"/>
</dbReference>
<dbReference type="HOGENOM" id="CLU_001666_2_1_1"/>
<dbReference type="InParanoid" id="Q9URU2"/>
<dbReference type="OMA" id="NYCEAAI"/>
<dbReference type="Reactome" id="R-SPO-174437">
    <property type="pathway name" value="Removal of the Flap Intermediate from the C-strand"/>
</dbReference>
<dbReference type="Reactome" id="R-SPO-69166">
    <property type="pathway name" value="Removal of the Flap Intermediate"/>
</dbReference>
<dbReference type="PRO" id="PR:Q9URU2"/>
<dbReference type="Proteomes" id="UP000002485">
    <property type="component" value="Chromosome II"/>
</dbReference>
<dbReference type="GO" id="GO:0140445">
    <property type="term" value="C:chromosome, telomeric repeat region"/>
    <property type="evidence" value="ECO:0000314"/>
    <property type="project" value="PomBase"/>
</dbReference>
<dbReference type="GO" id="GO:0005737">
    <property type="term" value="C:cytoplasm"/>
    <property type="evidence" value="ECO:0000314"/>
    <property type="project" value="PomBase"/>
</dbReference>
<dbReference type="GO" id="GO:0005829">
    <property type="term" value="C:cytosol"/>
    <property type="evidence" value="ECO:0007005"/>
    <property type="project" value="PomBase"/>
</dbReference>
<dbReference type="GO" id="GO:0042645">
    <property type="term" value="C:mitochondrial nucleoid"/>
    <property type="evidence" value="ECO:0000266"/>
    <property type="project" value="PomBase"/>
</dbReference>
<dbReference type="GO" id="GO:0043596">
    <property type="term" value="C:nuclear replication fork"/>
    <property type="evidence" value="ECO:0000314"/>
    <property type="project" value="PomBase"/>
</dbReference>
<dbReference type="GO" id="GO:0005654">
    <property type="term" value="C:nucleoplasm"/>
    <property type="evidence" value="ECO:0000314"/>
    <property type="project" value="PomBase"/>
</dbReference>
<dbReference type="GO" id="GO:0005634">
    <property type="term" value="C:nucleus"/>
    <property type="evidence" value="ECO:0007005"/>
    <property type="project" value="PomBase"/>
</dbReference>
<dbReference type="GO" id="GO:0005657">
    <property type="term" value="C:replication fork"/>
    <property type="evidence" value="ECO:0000314"/>
    <property type="project" value="UniProtKB"/>
</dbReference>
<dbReference type="GO" id="GO:0035861">
    <property type="term" value="C:site of double-strand break"/>
    <property type="evidence" value="ECO:0000314"/>
    <property type="project" value="PomBase"/>
</dbReference>
<dbReference type="GO" id="GO:0051539">
    <property type="term" value="F:4 iron, 4 sulfur cluster binding"/>
    <property type="evidence" value="ECO:0007669"/>
    <property type="project" value="UniProtKB-KW"/>
</dbReference>
<dbReference type="GO" id="GO:1990601">
    <property type="term" value="F:5' overhang single-stranded DNA endodeoxyribonuclease activity"/>
    <property type="evidence" value="ECO:0000314"/>
    <property type="project" value="PomBase"/>
</dbReference>
<dbReference type="GO" id="GO:0017108">
    <property type="term" value="F:5'-flap endonuclease activity"/>
    <property type="evidence" value="ECO:0000318"/>
    <property type="project" value="GO_Central"/>
</dbReference>
<dbReference type="GO" id="GO:0005524">
    <property type="term" value="F:ATP binding"/>
    <property type="evidence" value="ECO:0000255"/>
    <property type="project" value="PomBase"/>
</dbReference>
<dbReference type="GO" id="GO:0016887">
    <property type="term" value="F:ATP hydrolysis activity"/>
    <property type="evidence" value="ECO:0007669"/>
    <property type="project" value="RHEA"/>
</dbReference>
<dbReference type="GO" id="GO:0003682">
    <property type="term" value="F:chromatin binding"/>
    <property type="evidence" value="ECO:0000314"/>
    <property type="project" value="PomBase"/>
</dbReference>
<dbReference type="GO" id="GO:0003677">
    <property type="term" value="F:DNA binding"/>
    <property type="evidence" value="ECO:0007669"/>
    <property type="project" value="UniProtKB-KW"/>
</dbReference>
<dbReference type="GO" id="GO:0046872">
    <property type="term" value="F:metal ion binding"/>
    <property type="evidence" value="ECO:0007669"/>
    <property type="project" value="UniProtKB-KW"/>
</dbReference>
<dbReference type="GO" id="GO:0004518">
    <property type="term" value="F:nuclease activity"/>
    <property type="evidence" value="ECO:0000315"/>
    <property type="project" value="UniProtKB"/>
</dbReference>
<dbReference type="GO" id="GO:0019901">
    <property type="term" value="F:protein kinase binding"/>
    <property type="evidence" value="ECO:0000353"/>
    <property type="project" value="UniProtKB"/>
</dbReference>
<dbReference type="GO" id="GO:0003723">
    <property type="term" value="F:RNA binding"/>
    <property type="evidence" value="ECO:0000318"/>
    <property type="project" value="GO_Central"/>
</dbReference>
<dbReference type="GO" id="GO:0017116">
    <property type="term" value="F:single-stranded DNA helicase activity"/>
    <property type="evidence" value="ECO:0007669"/>
    <property type="project" value="InterPro"/>
</dbReference>
<dbReference type="GO" id="GO:0000724">
    <property type="term" value="P:double-strand break repair via homologous recombination"/>
    <property type="evidence" value="ECO:0000304"/>
    <property type="project" value="PomBase"/>
</dbReference>
<dbReference type="GO" id="GO:1903461">
    <property type="term" value="P:Okazaki fragment processing involved in mitotic DNA replication"/>
    <property type="evidence" value="ECO:0000315"/>
    <property type="project" value="PomBase"/>
</dbReference>
<dbReference type="GO" id="GO:1903469">
    <property type="term" value="P:removal of RNA primer involved in mitotic DNA replication"/>
    <property type="evidence" value="ECO:0000305"/>
    <property type="project" value="PomBase"/>
</dbReference>
<dbReference type="GO" id="GO:0031297">
    <property type="term" value="P:replication fork processing"/>
    <property type="evidence" value="ECO:0000315"/>
    <property type="project" value="PomBase"/>
</dbReference>
<dbReference type="GO" id="GO:0071932">
    <property type="term" value="P:replication fork reversal"/>
    <property type="evidence" value="ECO:0000315"/>
    <property type="project" value="UniProtKB"/>
</dbReference>
<dbReference type="GO" id="GO:0072429">
    <property type="term" value="P:response to intra-S DNA damage checkpoint signaling"/>
    <property type="evidence" value="ECO:0000315"/>
    <property type="project" value="UniProtKB"/>
</dbReference>
<dbReference type="GO" id="GO:0000723">
    <property type="term" value="P:telomere maintenance"/>
    <property type="evidence" value="ECO:0000316"/>
    <property type="project" value="PomBase"/>
</dbReference>
<dbReference type="CDD" id="cd18041">
    <property type="entry name" value="DEXXQc_DNA2"/>
    <property type="match status" value="1"/>
</dbReference>
<dbReference type="CDD" id="cd22318">
    <property type="entry name" value="DNA2_N-like"/>
    <property type="match status" value="1"/>
</dbReference>
<dbReference type="CDD" id="cd18808">
    <property type="entry name" value="SF1_C_Upf1"/>
    <property type="match status" value="1"/>
</dbReference>
<dbReference type="FunFam" id="3.40.50.300:FF:000721">
    <property type="entry name" value="DNA replication ATP-dependent helicase/nuclease DNA2"/>
    <property type="match status" value="1"/>
</dbReference>
<dbReference type="FunFam" id="3.40.50.300:FF:000789">
    <property type="entry name" value="DNA replication ATP-dependent helicase/nuclease DNA2"/>
    <property type="match status" value="1"/>
</dbReference>
<dbReference type="Gene3D" id="2.40.30.270">
    <property type="match status" value="1"/>
</dbReference>
<dbReference type="Gene3D" id="3.90.320.10">
    <property type="match status" value="1"/>
</dbReference>
<dbReference type="Gene3D" id="3.40.50.300">
    <property type="entry name" value="P-loop containing nucleotide triphosphate hydrolases"/>
    <property type="match status" value="3"/>
</dbReference>
<dbReference type="InterPro" id="IPR026851">
    <property type="entry name" value="Dna2/JHS1_DEXXQ-box"/>
</dbReference>
<dbReference type="InterPro" id="IPR045055">
    <property type="entry name" value="DNA2/NAM7-like"/>
</dbReference>
<dbReference type="InterPro" id="IPR041679">
    <property type="entry name" value="DNA2/NAM7-like_C"/>
</dbReference>
<dbReference type="InterPro" id="IPR041677">
    <property type="entry name" value="DNA2/NAM7_AAA_11"/>
</dbReference>
<dbReference type="InterPro" id="IPR014808">
    <property type="entry name" value="DNA_replication_fac_Dna2_N"/>
</dbReference>
<dbReference type="InterPro" id="IPR027417">
    <property type="entry name" value="P-loop_NTPase"/>
</dbReference>
<dbReference type="InterPro" id="IPR011604">
    <property type="entry name" value="PDDEXK-like_dom_sf"/>
</dbReference>
<dbReference type="InterPro" id="IPR047187">
    <property type="entry name" value="SF1_C_Upf1"/>
</dbReference>
<dbReference type="PANTHER" id="PTHR10887:SF433">
    <property type="entry name" value="DNA REPLICATION ATP-DEPENDENT HELICASE_NUCLEASE DNA2"/>
    <property type="match status" value="1"/>
</dbReference>
<dbReference type="PANTHER" id="PTHR10887">
    <property type="entry name" value="DNA2/NAM7 HELICASE FAMILY"/>
    <property type="match status" value="1"/>
</dbReference>
<dbReference type="Pfam" id="PF13086">
    <property type="entry name" value="AAA_11"/>
    <property type="match status" value="2"/>
</dbReference>
<dbReference type="Pfam" id="PF13087">
    <property type="entry name" value="AAA_12"/>
    <property type="match status" value="1"/>
</dbReference>
<dbReference type="Pfam" id="PF08696">
    <property type="entry name" value="Dna2"/>
    <property type="match status" value="1"/>
</dbReference>
<dbReference type="SUPFAM" id="SSF52540">
    <property type="entry name" value="P-loop containing nucleoside triphosphate hydrolases"/>
    <property type="match status" value="1"/>
</dbReference>
<gene>
    <name type="primary">dna2</name>
    <name type="ORF">SPBC16D10.04c</name>
</gene>
<reference key="1">
    <citation type="journal article" date="2000" name="Genetics">
        <title>Genetic analyses of Schizosaccharomyces pombe dna2+ reveal that dna2 plays an essential role in Okazaki fragment metabolism.</title>
        <authorList>
            <person name="Kang H.-Y."/>
            <person name="Choi E."/>
            <person name="Bae S.-H."/>
            <person name="Lee K.-H."/>
            <person name="Gim B.-S."/>
            <person name="Kim H.-D."/>
            <person name="Park C."/>
            <person name="MacNeill S.A."/>
            <person name="Seo Y.-S."/>
        </authorList>
    </citation>
    <scope>NUCLEOTIDE SEQUENCE [GENOMIC DNA]</scope>
    <scope>CHARACTERIZATION</scope>
</reference>
<reference key="2">
    <citation type="journal article" date="2002" name="Nature">
        <title>The genome sequence of Schizosaccharomyces pombe.</title>
        <authorList>
            <person name="Wood V."/>
            <person name="Gwilliam R."/>
            <person name="Rajandream M.A."/>
            <person name="Lyne M.H."/>
            <person name="Lyne R."/>
            <person name="Stewart A."/>
            <person name="Sgouros J.G."/>
            <person name="Peat N."/>
            <person name="Hayles J."/>
            <person name="Baker S.G."/>
            <person name="Basham D."/>
            <person name="Bowman S."/>
            <person name="Brooks K."/>
            <person name="Brown D."/>
            <person name="Brown S."/>
            <person name="Chillingworth T."/>
            <person name="Churcher C.M."/>
            <person name="Collins M."/>
            <person name="Connor R."/>
            <person name="Cronin A."/>
            <person name="Davis P."/>
            <person name="Feltwell T."/>
            <person name="Fraser A."/>
            <person name="Gentles S."/>
            <person name="Goble A."/>
            <person name="Hamlin N."/>
            <person name="Harris D.E."/>
            <person name="Hidalgo J."/>
            <person name="Hodgson G."/>
            <person name="Holroyd S."/>
            <person name="Hornsby T."/>
            <person name="Howarth S."/>
            <person name="Huckle E.J."/>
            <person name="Hunt S."/>
            <person name="Jagels K."/>
            <person name="James K.D."/>
            <person name="Jones L."/>
            <person name="Jones M."/>
            <person name="Leather S."/>
            <person name="McDonald S."/>
            <person name="McLean J."/>
            <person name="Mooney P."/>
            <person name="Moule S."/>
            <person name="Mungall K.L."/>
            <person name="Murphy L.D."/>
            <person name="Niblett D."/>
            <person name="Odell C."/>
            <person name="Oliver K."/>
            <person name="O'Neil S."/>
            <person name="Pearson D."/>
            <person name="Quail M.A."/>
            <person name="Rabbinowitsch E."/>
            <person name="Rutherford K.M."/>
            <person name="Rutter S."/>
            <person name="Saunders D."/>
            <person name="Seeger K."/>
            <person name="Sharp S."/>
            <person name="Skelton J."/>
            <person name="Simmonds M.N."/>
            <person name="Squares R."/>
            <person name="Squares S."/>
            <person name="Stevens K."/>
            <person name="Taylor K."/>
            <person name="Taylor R.G."/>
            <person name="Tivey A."/>
            <person name="Walsh S.V."/>
            <person name="Warren T."/>
            <person name="Whitehead S."/>
            <person name="Woodward J.R."/>
            <person name="Volckaert G."/>
            <person name="Aert R."/>
            <person name="Robben J."/>
            <person name="Grymonprez B."/>
            <person name="Weltjens I."/>
            <person name="Vanstreels E."/>
            <person name="Rieger M."/>
            <person name="Schaefer M."/>
            <person name="Mueller-Auer S."/>
            <person name="Gabel C."/>
            <person name="Fuchs M."/>
            <person name="Duesterhoeft A."/>
            <person name="Fritzc C."/>
            <person name="Holzer E."/>
            <person name="Moestl D."/>
            <person name="Hilbert H."/>
            <person name="Borzym K."/>
            <person name="Langer I."/>
            <person name="Beck A."/>
            <person name="Lehrach H."/>
            <person name="Reinhardt R."/>
            <person name="Pohl T.M."/>
            <person name="Eger P."/>
            <person name="Zimmermann W."/>
            <person name="Wedler H."/>
            <person name="Wambutt R."/>
            <person name="Purnelle B."/>
            <person name="Goffeau A."/>
            <person name="Cadieu E."/>
            <person name="Dreano S."/>
            <person name="Gloux S."/>
            <person name="Lelaure V."/>
            <person name="Mottier S."/>
            <person name="Galibert F."/>
            <person name="Aves S.J."/>
            <person name="Xiang Z."/>
            <person name="Hunt C."/>
            <person name="Moore K."/>
            <person name="Hurst S.M."/>
            <person name="Lucas M."/>
            <person name="Rochet M."/>
            <person name="Gaillardin C."/>
            <person name="Tallada V.A."/>
            <person name="Garzon A."/>
            <person name="Thode G."/>
            <person name="Daga R.R."/>
            <person name="Cruzado L."/>
            <person name="Jimenez J."/>
            <person name="Sanchez M."/>
            <person name="del Rey F."/>
            <person name="Benito J."/>
            <person name="Dominguez A."/>
            <person name="Revuelta J.L."/>
            <person name="Moreno S."/>
            <person name="Armstrong J."/>
            <person name="Forsburg S.L."/>
            <person name="Cerutti L."/>
            <person name="Lowe T."/>
            <person name="McCombie W.R."/>
            <person name="Paulsen I."/>
            <person name="Potashkin J."/>
            <person name="Shpakovski G.V."/>
            <person name="Ussery D."/>
            <person name="Barrell B.G."/>
            <person name="Nurse P."/>
        </authorList>
    </citation>
    <scope>NUCLEOTIDE SEQUENCE [LARGE SCALE GENOMIC DNA]</scope>
    <source>
        <strain>972 / ATCC 24843</strain>
    </source>
</reference>
<reference key="3">
    <citation type="journal article" date="2011" name="Science">
        <title>Comparative functional genomics of the fission yeasts.</title>
        <authorList>
            <person name="Rhind N."/>
            <person name="Chen Z."/>
            <person name="Yassour M."/>
            <person name="Thompson D.A."/>
            <person name="Haas B.J."/>
            <person name="Habib N."/>
            <person name="Wapinski I."/>
            <person name="Roy S."/>
            <person name="Lin M.F."/>
            <person name="Heiman D.I."/>
            <person name="Young S.K."/>
            <person name="Furuya K."/>
            <person name="Guo Y."/>
            <person name="Pidoux A."/>
            <person name="Chen H.M."/>
            <person name="Robbertse B."/>
            <person name="Goldberg J.M."/>
            <person name="Aoki K."/>
            <person name="Bayne E.H."/>
            <person name="Berlin A.M."/>
            <person name="Desjardins C.A."/>
            <person name="Dobbs E."/>
            <person name="Dukaj L."/>
            <person name="Fan L."/>
            <person name="FitzGerald M.G."/>
            <person name="French C."/>
            <person name="Gujja S."/>
            <person name="Hansen K."/>
            <person name="Keifenheim D."/>
            <person name="Levin J.Z."/>
            <person name="Mosher R.A."/>
            <person name="Mueller C.A."/>
            <person name="Pfiffner J."/>
            <person name="Priest M."/>
            <person name="Russ C."/>
            <person name="Smialowska A."/>
            <person name="Swoboda P."/>
            <person name="Sykes S.M."/>
            <person name="Vaughn M."/>
            <person name="Vengrova S."/>
            <person name="Yoder R."/>
            <person name="Zeng Q."/>
            <person name="Allshire R."/>
            <person name="Baulcombe D."/>
            <person name="Birren B.W."/>
            <person name="Brown W."/>
            <person name="Ekwall K."/>
            <person name="Kellis M."/>
            <person name="Leatherwood J."/>
            <person name="Levin H."/>
            <person name="Margalit H."/>
            <person name="Martienssen R."/>
            <person name="Nieduszynski C.A."/>
            <person name="Spatafora J.W."/>
            <person name="Friedman N."/>
            <person name="Dalgaard J.Z."/>
            <person name="Baumann P."/>
            <person name="Niki H."/>
            <person name="Regev A."/>
            <person name="Nusbaum C."/>
        </authorList>
    </citation>
    <scope>REVISION OF GENE MODEL</scope>
</reference>
<reference key="4">
    <citation type="journal article" date="2000" name="Genes Cells">
        <title>Large-scale screening of intracellular protein localization in living fission yeast cells by the use of a GFP-fusion genomic DNA library.</title>
        <authorList>
            <person name="Ding D.-Q."/>
            <person name="Tomita Y."/>
            <person name="Yamamoto A."/>
            <person name="Chikashige Y."/>
            <person name="Haraguchi T."/>
            <person name="Hiraoka Y."/>
        </authorList>
    </citation>
    <scope>NUCLEOTIDE SEQUENCE [LARGE SCALE GENOMIC DNA] OF 120-140</scope>
    <scope>SUBCELLULAR LOCATION</scope>
    <source>
        <strain>ATCC 38364 / 968</strain>
    </source>
</reference>
<reference key="5">
    <citation type="journal article" date="1998" name="Genetics">
        <title>Fission yeast cdc24(+) encodes a novel replication factor required for chromosome integrity.</title>
        <authorList>
            <person name="Gould K.L."/>
            <person name="Burns C.G."/>
            <person name="Feoktistova A."/>
            <person name="Hu C.-P."/>
            <person name="Pasion S.G."/>
            <person name="Forsburg S.L."/>
        </authorList>
    </citation>
    <scope>NUCLEOTIDE SEQUENCE [GENOMIC DNA] OF 1053-1243</scope>
    <source>
        <strain>972 / ATCC 24843</strain>
    </source>
</reference>
<reference key="6">
    <citation type="journal article" date="2004" name="Nucleic Acids Res.">
        <title>Genetic and biochemical analyses of Pfh1 DNA helicase function in fission yeast.</title>
        <authorList>
            <person name="Ryu G.H."/>
            <person name="Tanaka H."/>
            <person name="Kim D.H."/>
            <person name="Kim J.H."/>
            <person name="Bae S.H."/>
            <person name="Kwon Y.N."/>
            <person name="Rhee J.S."/>
            <person name="MacNeill S.A."/>
            <person name="Seo Y.S."/>
        </authorList>
    </citation>
    <scope>FUNCTION</scope>
</reference>
<reference key="7">
    <citation type="journal article" date="2004" name="Mol. Cell. Biol.">
        <title>Fission yeast Dna2 is required for generation of the telomeric single-strand overhang.</title>
        <authorList>
            <person name="Tomita K."/>
            <person name="Kibe T."/>
            <person name="Kang H.Y."/>
            <person name="Seo Y.S."/>
            <person name="Uritani M."/>
            <person name="Ushimaru T."/>
            <person name="Ueno M."/>
        </authorList>
    </citation>
    <scope>FUNCTION</scope>
    <scope>TELOMERE-BINDING</scope>
</reference>
<reference key="8">
    <citation type="journal article" date="2004" name="Nucleic Acids Res.">
        <title>Genetics of lagging strand DNA synthesis and maturation in fission yeast: suppression analysis links the Dna2-Cdc24 complex to DNA polymerase delta.</title>
        <authorList>
            <person name="Tanaka H."/>
            <person name="Ryu G.H."/>
            <person name="Seo Y.S."/>
            <person name="MacNeill S.A."/>
        </authorList>
    </citation>
    <scope>FUNCTION</scope>
    <scope>INTERACTION WITH CDC24</scope>
</reference>
<reference key="9">
    <citation type="journal article" date="2005" name="Curr. Genet.">
        <title>Genetic and physical interactions between Schizosaccharomyces pombe Mcl1 and Rad2, Dna2 and DNA polymerase alpha: evidence for a multifunctional role of Mcl1 in DNA replication and repair.</title>
        <authorList>
            <person name="Tsutsui Y."/>
            <person name="Morishita T."/>
            <person name="Natsume T."/>
            <person name="Yamashita K."/>
            <person name="Iwasaki H."/>
            <person name="Yamao F."/>
            <person name="Shinagawa H."/>
        </authorList>
    </citation>
    <scope>FUNCTION</scope>
</reference>
<reference key="10">
    <citation type="journal article" date="2006" name="Nat. Biotechnol.">
        <title>ORFeome cloning and global analysis of protein localization in the fission yeast Schizosaccharomyces pombe.</title>
        <authorList>
            <person name="Matsuyama A."/>
            <person name="Arai R."/>
            <person name="Yashiroda Y."/>
            <person name="Shirai A."/>
            <person name="Kamata A."/>
            <person name="Sekido S."/>
            <person name="Kobayashi Y."/>
            <person name="Hashimoto A."/>
            <person name="Hamamoto M."/>
            <person name="Hiraoka Y."/>
            <person name="Horinouchi S."/>
            <person name="Yoshida M."/>
        </authorList>
    </citation>
    <scope>SUBCELLULAR LOCATION [LARGE SCALE ANALYSIS]</scope>
</reference>
<reference key="11">
    <citation type="journal article" date="2012" name="Cell">
        <title>The intra-s phase checkpoint targets dna2 to prevent stalled replication forks from reversing.</title>
        <authorList>
            <person name="Hu J."/>
            <person name="Sun L."/>
            <person name="Shen F."/>
            <person name="Chen Y."/>
            <person name="Hua Y."/>
            <person name="Liu Y."/>
            <person name="Zhang M."/>
            <person name="Hu Y."/>
            <person name="Wang Q."/>
            <person name="Xu W."/>
            <person name="Sun F."/>
            <person name="Ji J."/>
            <person name="Murray J.M."/>
            <person name="Carr A.M."/>
            <person name="Kong D."/>
        </authorList>
    </citation>
    <scope>FUNCTION</scope>
    <scope>PHOSPHORYLATION AT SER-134 AND SER-219</scope>
    <scope>MUTAGENESIS OF SER-219; GLU-559 AND LYS-960</scope>
</reference>
<sequence length="1397" mass="157659">MFNDQSKTTSSVKGICATTDNNHGNLKKTNSTPFRKNYLLNGRTKLKLENFAYNASTEISSPKISEKKHSSLPIKRKNTFNESSTSFSPFTKAHKEITDDLKPDKSFTRKSDLNSQDMPVCFQETSKDLCRSSSTQHLLDHQTTDSTIIDMKPVSTNSKSDVFTLYTDETVLLRRCASDNKPLINNNLSSSNVSENQSRSFGSYDEVKNQGNNLHKVPSLVSIIRNARSSEQSRIAANSSCLLKGSDTEIDEDDFALEAEDLAALDSLERQYSQLPNSTVTASAKDIEKTAKVNHVGGDLQSYCSATKASDATINEEPVNLALDKACNSLPDINSDFIDDWDDSCDGCTPGELCEFSSEYTVLEVHEDFIFHEGNHFRQLKLILEANDILHQLFLRGDWTETSIFVGDSIRVEATFDKDNTAIVDNDKGLIIIHPKILMSATAVASSFPCLRKAVISDRVGIYGPPTKAMVTGNILHDFFQHALYRGIDALENVDINLETSIKTYISDIYFADLSLDEIREELDARLPLLKSIVERYLISKKNDNNNESIHISRLLDIEESIWSPRFGLKGNIDATVEVVLTEKPESSSTLTLPLELKTGRYVDNISHFAQSLLYTLLISDRYGINTNQALLCYLENSTIKNLVASNSQLRGLIMTRNSLAQHNFRRSLPEMISNRKICDHCSLVSECLFFQKMSDKGVANSNGLTESWNEWMREVKDEDLEFYKKWEKLLNQEERLLLLKRGDVLTFDTEELEAYGKTLYPLYITKEDIVCLEIDDRVFHYKFAFLNDNGYPRNFLHSGFSVGERVFISDEHGHWSLAKGHIVHIQDSCIEVRTRHRLHIPWLKMPNFDFKKNQVFFGNYEDSKLSFIGSNHTRYRIDKDEFSSGIASIRGTLMSSVLPDAPLIIRDMIIRLKPPKFCNSALIDPEFLKCLNEDQITALKKCHAAEHYSLILGMPGTGKTTTISSLIRSLLAKKKKILLTSFTHLAVDNILIKLKGCDSTIVRLGSPHKIHPLVKEFCLTEGTTFDDLASLKHFYEDPQIVACSSLGVYHSIFNKRKFDYCIIDEASQIPLPICLGPLQLAEKFVLVGDHYQLPPLVKNSRTSKDGLSLSLFKLLSEKHPEAVTTLRLQYRMNEDINSLSSELIYGGNLVCGSKTISQKKLILPKAHLSDGLPDSSSSLHWVNKLINPSHSVIFFNTDDILGVESKTNNILENHTEAFLIEQAVSSFLERGVKQSSIGIISIYKSQVELLSKNLKSFTEIEINTVDRYQGRDKDIILISFVRSNSKNLVGELLRDWHRLNVALSRAKVKCIMFGSLSTLSSSNIVSHLLKLLEKNKWIFTLNENDIATKFDENSSPIKDCSQVATTNNAKVIIRKNQRFFNSDNLCEKAILPQLEF</sequence>
<proteinExistence type="evidence at protein level"/>
<comment type="function">
    <text evidence="3 4 5 6 7">Key enzyme involved in DNA replication and DNA repair. Involved in Okazaki fragments processing by cleaving long flaps that escape fen1: flaps that are longer than 27 nucleotides are coated by replication protein A complex (RPA), leading to recruit dna2 which cleaves the flap until it is too short to bind RPA and becomes a substrate for fen1. Is a target of the intra-S phase checkpoint, associating with stalled replication forks when phosphorylated at Ser-219 and preventing the stalled replication forks from reversing. Also involved in 5'-end resection of DNA during double-strand break (DSB) repair by mediating the cleavage of 5'-ssDNA. Also required for the production of G-rich single-strand overhangs at telomere ends and thus in telomere length maintenance. Possesses different enzymatic activities, such as single-stranded DNA (ssDNA)-dependent ATPase, 5'-3' helicase and endonuclease activities. While the ATPase and endonuclease activities are well-defined and play a key role in Okazaki fragments processing and DSB repair, the 5'-3' DNA helicase activity is atypical: it cannot load onto its tracking strand internally and has an absolute free 5'-end requirement. Helicase activity may promote the motion of dna2 on the flap, helping the nuclease function.</text>
</comment>
<comment type="catalytic activity">
    <reaction>
        <text>ATP + H2O = ADP + phosphate + H(+)</text>
        <dbReference type="Rhea" id="RHEA:13065"/>
        <dbReference type="ChEBI" id="CHEBI:15377"/>
        <dbReference type="ChEBI" id="CHEBI:15378"/>
        <dbReference type="ChEBI" id="CHEBI:30616"/>
        <dbReference type="ChEBI" id="CHEBI:43474"/>
        <dbReference type="ChEBI" id="CHEBI:456216"/>
        <dbReference type="EC" id="3.6.4.12"/>
    </reaction>
</comment>
<comment type="cofactor">
    <cofactor evidence="1">
        <name>[4Fe-4S] cluster</name>
        <dbReference type="ChEBI" id="CHEBI:49883"/>
    </cofactor>
    <text evidence="1">Binds 1 [4Fe-4S] cluster.</text>
</comment>
<comment type="subunit">
    <text evidence="5">Interacts with cdc1, cdc24 and rad2.</text>
</comment>
<comment type="interaction">
    <interactant intactId="EBI-16120355">
        <id>Q9URU2</id>
    </interactant>
    <interactant intactId="EBI-1559355">
        <id>O75004</id>
        <label>cdc24</label>
    </interactant>
    <organismsDiffer>false</organismsDiffer>
    <experiments>3</experiments>
</comment>
<comment type="subcellular location">
    <subcellularLocation>
        <location>Cytoplasm</location>
    </subcellularLocation>
    <subcellularLocation>
        <location>Nucleus</location>
    </subcellularLocation>
    <subcellularLocation>
        <location>Chromosome</location>
        <location>Telomere</location>
    </subcellularLocation>
    <text>Recruited to double-strand. break (DSB) sites.</text>
</comment>
<comment type="PTM">
    <text evidence="7">Phosphorylated at Ser-219 by cds1/check2, leading to association with stalled replication forks.</text>
</comment>
<comment type="similarity">
    <text evidence="8">Belongs to the DNA2/NAM7 helicase family.</text>
</comment>